<reference key="1">
    <citation type="journal article" date="2000" name="Nature">
        <title>Complete genome sequence of Pseudomonas aeruginosa PAO1, an opportunistic pathogen.</title>
        <authorList>
            <person name="Stover C.K."/>
            <person name="Pham X.-Q.T."/>
            <person name="Erwin A.L."/>
            <person name="Mizoguchi S.D."/>
            <person name="Warrener P."/>
            <person name="Hickey M.J."/>
            <person name="Brinkman F.S.L."/>
            <person name="Hufnagle W.O."/>
            <person name="Kowalik D.J."/>
            <person name="Lagrou M."/>
            <person name="Garber R.L."/>
            <person name="Goltry L."/>
            <person name="Tolentino E."/>
            <person name="Westbrock-Wadman S."/>
            <person name="Yuan Y."/>
            <person name="Brody L.L."/>
            <person name="Coulter S.N."/>
            <person name="Folger K.R."/>
            <person name="Kas A."/>
            <person name="Larbig K."/>
            <person name="Lim R.M."/>
            <person name="Smith K.A."/>
            <person name="Spencer D.H."/>
            <person name="Wong G.K.-S."/>
            <person name="Wu Z."/>
            <person name="Paulsen I.T."/>
            <person name="Reizer J."/>
            <person name="Saier M.H. Jr."/>
            <person name="Hancock R.E.W."/>
            <person name="Lory S."/>
            <person name="Olson M.V."/>
        </authorList>
    </citation>
    <scope>NUCLEOTIDE SEQUENCE [LARGE SCALE GENOMIC DNA]</scope>
    <source>
        <strain>ATCC 15692 / DSM 22644 / CIP 104116 / JCM 14847 / LMG 12228 / 1C / PRS 101 / PAO1</strain>
    </source>
</reference>
<reference key="2">
    <citation type="journal article" date="2002" name="Proc. Natl. Acad. Sci. U.S.A.">
        <title>A polyphosphate kinase (PPK2) widely conserved in bacteria.</title>
        <authorList>
            <person name="Zhang H."/>
            <person name="Ishige K."/>
            <person name="Kornberg A."/>
        </authorList>
    </citation>
    <scope>PROTEIN SEQUENCE OF 2-10</scope>
    <scope>IDENTIFICATION BY MASS SPECTROMETRY</scope>
    <scope>FUNCTION</scope>
    <scope>CATALYTIC ACTIVITY</scope>
    <scope>COFACTOR</scope>
    <scope>BIOPHYSICOCHEMICAL PROPERTIES</scope>
    <source>
        <strain>PAOM5</strain>
    </source>
</reference>
<reference key="3">
    <citation type="journal article" date="2002" name="Proc. Natl. Acad. Sci. U.S.A.">
        <title>Polyphosphate kinase (PPK2), a potent, polyphosphate-driven generator of GTP.</title>
        <authorList>
            <person name="Ishige K."/>
            <person name="Zhang H."/>
            <person name="Kornberg A."/>
        </authorList>
    </citation>
    <scope>FUNCTION</scope>
    <scope>CATALYTIC ACTIVITY</scope>
    <scope>COFACTOR</scope>
    <scope>BIOPHYSICOCHEMICAL PROPERTIES</scope>
    <scope>SUBUNIT</scope>
    <source>
        <strain>PAOM5</strain>
    </source>
</reference>
<feature type="initiator methionine" description="Removed" evidence="3">
    <location>
        <position position="1"/>
    </location>
</feature>
<feature type="chain" id="PRO_0000442587" description="GDP-polyphosphate phosphotransferase">
    <location>
        <begin position="2"/>
        <end position="357"/>
    </location>
</feature>
<feature type="region of interest" description="Disordered" evidence="1">
    <location>
        <begin position="1"/>
        <end position="83"/>
    </location>
</feature>
<feature type="compositionally biased region" description="Low complexity" evidence="1">
    <location>
        <begin position="14"/>
        <end position="25"/>
    </location>
</feature>
<feature type="compositionally biased region" description="Basic residues" evidence="1">
    <location>
        <begin position="26"/>
        <end position="40"/>
    </location>
</feature>
<comment type="function">
    <text evidence="2 3">Uses inorganic polyphosphate (polyP) as a donor to convert GDP to GTP and ADP to ATP. Shows a preference for GDP. Can also catalyze the synthesis of polyP from GTP or ATP, but the rate of polyP utilization is 75-fold greater than the rate of polyP synthesis.</text>
</comment>
<comment type="catalytic activity">
    <reaction evidence="2 3">
        <text>[phosphate](n) + GTP = [phosphate](n+1) + GDP</text>
        <dbReference type="Rhea" id="RHEA:55412"/>
        <dbReference type="Rhea" id="RHEA-COMP:9859"/>
        <dbReference type="Rhea" id="RHEA-COMP:14280"/>
        <dbReference type="ChEBI" id="CHEBI:16838"/>
        <dbReference type="ChEBI" id="CHEBI:37565"/>
        <dbReference type="ChEBI" id="CHEBI:58189"/>
        <dbReference type="EC" id="2.7.4.34"/>
    </reaction>
    <physiologicalReaction direction="right-to-left" evidence="2 3">
        <dbReference type="Rhea" id="RHEA:55414"/>
    </physiologicalReaction>
</comment>
<comment type="catalytic activity">
    <reaction evidence="2 3">
        <text>[phosphate](n) + ATP = [phosphate](n+1) + ADP</text>
        <dbReference type="Rhea" id="RHEA:19573"/>
        <dbReference type="Rhea" id="RHEA-COMP:9859"/>
        <dbReference type="Rhea" id="RHEA-COMP:14280"/>
        <dbReference type="ChEBI" id="CHEBI:16838"/>
        <dbReference type="ChEBI" id="CHEBI:30616"/>
        <dbReference type="ChEBI" id="CHEBI:456216"/>
    </reaction>
    <physiologicalReaction direction="right-to-left" evidence="2 3">
        <dbReference type="Rhea" id="RHEA:19575"/>
    </physiologicalReaction>
</comment>
<comment type="cofactor">
    <cofactor evidence="2 3">
        <name>Mg(2+)</name>
        <dbReference type="ChEBI" id="CHEBI:18420"/>
    </cofactor>
    <cofactor evidence="2 3">
        <name>Mn(2+)</name>
        <dbReference type="ChEBI" id="CHEBI:29035"/>
    </cofactor>
    <text evidence="2 3">Mg(2+) is preferred for polyP utilization and Mn(2+) is preferred for polyP synthesis.</text>
</comment>
<comment type="biophysicochemical properties">
    <kinetics>
        <KM evidence="2">300 uM for GDP</KM>
        <KM evidence="2">750 uM for ADP</KM>
        <KM evidence="3">0.68 mM for GTP</KM>
        <KM evidence="3">0.5 mM for ATP</KM>
    </kinetics>
</comment>
<comment type="subunit">
    <text evidence="2">Homotetramer. Also forms octamers.</text>
</comment>
<comment type="similarity">
    <text evidence="5">Belongs to the polyphosphate kinase 2 (PPK2) family. Class I subfamily.</text>
</comment>
<comment type="sequence caution" evidence="6">
    <conflict type="erroneous initiation">
        <sequence resource="EMBL-CDS" id="AAG03531"/>
    </conflict>
    <text>Truncated N-terminus.</text>
</comment>
<proteinExistence type="evidence at protein level"/>
<keyword id="KW-0066">ATP synthesis</keyword>
<keyword id="KW-0903">Direct protein sequencing</keyword>
<keyword id="KW-0418">Kinase</keyword>
<keyword id="KW-0460">Magnesium</keyword>
<keyword id="KW-0464">Manganese</keyword>
<keyword id="KW-1185">Reference proteome</keyword>
<keyword id="KW-0808">Transferase</keyword>
<evidence type="ECO:0000256" key="1">
    <source>
        <dbReference type="SAM" id="MobiDB-lite"/>
    </source>
</evidence>
<evidence type="ECO:0000269" key="2">
    <source>
    </source>
</evidence>
<evidence type="ECO:0000269" key="3">
    <source>
    </source>
</evidence>
<evidence type="ECO:0000303" key="4">
    <source>
    </source>
</evidence>
<evidence type="ECO:0000305" key="5"/>
<evidence type="ECO:0000305" key="6">
    <source>
    </source>
</evidence>
<evidence type="ECO:0000312" key="7">
    <source>
        <dbReference type="EMBL" id="AAG03531.1"/>
    </source>
</evidence>
<gene>
    <name evidence="4" type="primary">ppk2</name>
    <name evidence="7" type="ordered locus">PA0141</name>
</gene>
<protein>
    <recommendedName>
        <fullName evidence="5">GDP-polyphosphate phosphotransferase</fullName>
        <ecNumber evidence="2 3">2.7.4.34</ecNumber>
    </recommendedName>
    <alternativeName>
        <fullName evidence="5">Polyphosphate kinase PPK2 1</fullName>
    </alternativeName>
</protein>
<organism>
    <name type="scientific">Pseudomonas aeruginosa (strain ATCC 15692 / DSM 22644 / CIP 104116 / JCM 14847 / LMG 12228 / 1C / PRS 101 / PAO1)</name>
    <dbReference type="NCBI Taxonomy" id="208964"/>
    <lineage>
        <taxon>Bacteria</taxon>
        <taxon>Pseudomonadati</taxon>
        <taxon>Pseudomonadota</taxon>
        <taxon>Gammaproteobacteria</taxon>
        <taxon>Pseudomonadales</taxon>
        <taxon>Pseudomonadaceae</taxon>
        <taxon>Pseudomonas</taxon>
    </lineage>
</organism>
<dbReference type="EC" id="2.7.4.34" evidence="2 3"/>
<dbReference type="EMBL" id="AE004091">
    <property type="protein sequence ID" value="AAG03531.1"/>
    <property type="status" value="ALT_INIT"/>
    <property type="molecule type" value="Genomic_DNA"/>
</dbReference>
<dbReference type="PIR" id="E83627">
    <property type="entry name" value="E83627"/>
</dbReference>
<dbReference type="RefSeq" id="NP_248831.1">
    <property type="nucleotide sequence ID" value="NC_002516.2"/>
</dbReference>
<dbReference type="SMR" id="Q9I6Z1"/>
<dbReference type="STRING" id="208964.PA0141"/>
<dbReference type="PaxDb" id="208964-PA0141"/>
<dbReference type="GeneID" id="879494"/>
<dbReference type="KEGG" id="pae:PA0141"/>
<dbReference type="PATRIC" id="fig|208964.12.peg.147"/>
<dbReference type="PseudoCAP" id="PA0141"/>
<dbReference type="HOGENOM" id="CLU_048699_2_1_6"/>
<dbReference type="InParanoid" id="Q9I6Z1"/>
<dbReference type="OrthoDB" id="9775224at2"/>
<dbReference type="PhylomeDB" id="Q9I6Z1"/>
<dbReference type="BioCyc" id="PAER208964:G1FZ6-143-MONOMER"/>
<dbReference type="BRENDA" id="2.7.4.1">
    <property type="organism ID" value="5087"/>
</dbReference>
<dbReference type="BRENDA" id="2.7.4.34">
    <property type="organism ID" value="5087"/>
</dbReference>
<dbReference type="Proteomes" id="UP000002438">
    <property type="component" value="Chromosome"/>
</dbReference>
<dbReference type="GO" id="GO:0008976">
    <property type="term" value="F:polyphosphate kinase activity"/>
    <property type="evidence" value="ECO:0000318"/>
    <property type="project" value="GO_Central"/>
</dbReference>
<dbReference type="GO" id="GO:0006754">
    <property type="term" value="P:ATP biosynthetic process"/>
    <property type="evidence" value="ECO:0007669"/>
    <property type="project" value="UniProtKB-KW"/>
</dbReference>
<dbReference type="GO" id="GO:0006183">
    <property type="term" value="P:GTP biosynthetic process"/>
    <property type="evidence" value="ECO:0000318"/>
    <property type="project" value="GO_Central"/>
</dbReference>
<dbReference type="Gene3D" id="3.40.50.300">
    <property type="entry name" value="P-loop containing nucleotide triphosphate hydrolases"/>
    <property type="match status" value="1"/>
</dbReference>
<dbReference type="InterPro" id="IPR027417">
    <property type="entry name" value="P-loop_NTPase"/>
</dbReference>
<dbReference type="InterPro" id="IPR022488">
    <property type="entry name" value="PPK2-related"/>
</dbReference>
<dbReference type="InterPro" id="IPR022486">
    <property type="entry name" value="PPK2_PA0141"/>
</dbReference>
<dbReference type="NCBIfam" id="TIGR03707">
    <property type="entry name" value="PPK2_P_aer"/>
    <property type="match status" value="1"/>
</dbReference>
<dbReference type="PANTHER" id="PTHR34383:SF1">
    <property type="entry name" value="ADP-POLYPHOSPHATE PHOSPHOTRANSFERASE"/>
    <property type="match status" value="1"/>
</dbReference>
<dbReference type="PANTHER" id="PTHR34383">
    <property type="entry name" value="POLYPHOSPHATE:AMP PHOSPHOTRANSFERASE-RELATED"/>
    <property type="match status" value="1"/>
</dbReference>
<dbReference type="Pfam" id="PF03976">
    <property type="entry name" value="PPK2"/>
    <property type="match status" value="1"/>
</dbReference>
<dbReference type="SUPFAM" id="SSF52540">
    <property type="entry name" value="P-loop containing nucleoside triphosphate hydrolases"/>
    <property type="match status" value="1"/>
</dbReference>
<accession>Q9I6Z1</accession>
<name>PK21A_PSEAE</name>
<sequence>MSEEPTVSPPSPEQPAAQPAKPARPAARRAPRKPATRRPRVASPAQKAREEIQAISQKPVALQVASAPHGSSEDSTSASLPANYPYHTRMRRNEYEKAKHDLQIELLKVQSWVKETGQRVVVLFEGRDAAGKGGTIKRFMEHLNPRGARIVALEKPSSQEQGQWYFQRYIQHLPTAGEMVFFDRSWYNRAGVERVMGFCSPLQYLEFMRQAPELERMLTNSGILLFKYWFSVSREEQLRRFISRRDDPLKHWKLSPIDIKSLDKWDDYTAAKQAMFFHTDTADAPWTVIKSDDKKRARLNCIRHFLHSLDYPDKDRRIAHEPDPLLVGPASRVIEEDEKVYAEAAAAPGHANLDIPA</sequence>